<proteinExistence type="inferred from homology"/>
<keyword id="KW-1003">Cell membrane</keyword>
<keyword id="KW-0406">Ion transport</keyword>
<keyword id="KW-0472">Membrane</keyword>
<keyword id="KW-0630">Potassium</keyword>
<keyword id="KW-0633">Potassium transport</keyword>
<keyword id="KW-1185">Reference proteome</keyword>
<keyword id="KW-0812">Transmembrane</keyword>
<keyword id="KW-1133">Transmembrane helix</keyword>
<keyword id="KW-0813">Transport</keyword>
<dbReference type="EMBL" id="AL939117">
    <property type="protein sequence ID" value="CAB44421.1"/>
    <property type="molecule type" value="Genomic_DNA"/>
</dbReference>
<dbReference type="PIR" id="T36653">
    <property type="entry name" value="T36653"/>
</dbReference>
<dbReference type="RefSeq" id="NP_627910.1">
    <property type="nucleotide sequence ID" value="NC_003888.3"/>
</dbReference>
<dbReference type="RefSeq" id="WP_011029188.1">
    <property type="nucleotide sequence ID" value="NZ_VNID01000003.1"/>
</dbReference>
<dbReference type="SMR" id="Q9X900"/>
<dbReference type="FunCoup" id="Q9X900">
    <property type="interactions" value="60"/>
</dbReference>
<dbReference type="STRING" id="100226.gene:17761342"/>
<dbReference type="PaxDb" id="100226-SCO3718"/>
<dbReference type="KEGG" id="sco:SCO3718"/>
<dbReference type="PATRIC" id="fig|100226.15.peg.3779"/>
<dbReference type="eggNOG" id="COG2060">
    <property type="taxonomic scope" value="Bacteria"/>
</dbReference>
<dbReference type="HOGENOM" id="CLU_018614_3_0_11"/>
<dbReference type="InParanoid" id="Q9X900"/>
<dbReference type="OrthoDB" id="9763796at2"/>
<dbReference type="PhylomeDB" id="Q9X900"/>
<dbReference type="Proteomes" id="UP000001973">
    <property type="component" value="Chromosome"/>
</dbReference>
<dbReference type="GO" id="GO:0005886">
    <property type="term" value="C:plasma membrane"/>
    <property type="evidence" value="ECO:0000318"/>
    <property type="project" value="GO_Central"/>
</dbReference>
<dbReference type="GO" id="GO:0008556">
    <property type="term" value="F:P-type potassium transmembrane transporter activity"/>
    <property type="evidence" value="ECO:0000318"/>
    <property type="project" value="GO_Central"/>
</dbReference>
<dbReference type="GO" id="GO:0030955">
    <property type="term" value="F:potassium ion binding"/>
    <property type="evidence" value="ECO:0007669"/>
    <property type="project" value="UniProtKB-UniRule"/>
</dbReference>
<dbReference type="GO" id="GO:0071805">
    <property type="term" value="P:potassium ion transmembrane transport"/>
    <property type="evidence" value="ECO:0000318"/>
    <property type="project" value="GO_Central"/>
</dbReference>
<dbReference type="HAMAP" id="MF_00275">
    <property type="entry name" value="KdpA"/>
    <property type="match status" value="1"/>
</dbReference>
<dbReference type="InterPro" id="IPR004623">
    <property type="entry name" value="KdpA"/>
</dbReference>
<dbReference type="NCBIfam" id="TIGR00680">
    <property type="entry name" value="kdpA"/>
    <property type="match status" value="1"/>
</dbReference>
<dbReference type="PANTHER" id="PTHR30607">
    <property type="entry name" value="POTASSIUM-TRANSPORTING ATPASE A CHAIN"/>
    <property type="match status" value="1"/>
</dbReference>
<dbReference type="PANTHER" id="PTHR30607:SF2">
    <property type="entry name" value="POTASSIUM-TRANSPORTING ATPASE POTASSIUM-BINDING SUBUNIT"/>
    <property type="match status" value="1"/>
</dbReference>
<dbReference type="Pfam" id="PF03814">
    <property type="entry name" value="KdpA"/>
    <property type="match status" value="1"/>
</dbReference>
<dbReference type="PIRSF" id="PIRSF001294">
    <property type="entry name" value="K_ATPaseA"/>
    <property type="match status" value="1"/>
</dbReference>
<feature type="chain" id="PRO_0000166536" description="Potassium-transporting ATPase potassium-binding subunit">
    <location>
        <begin position="1"/>
        <end position="554"/>
    </location>
</feature>
<feature type="transmembrane region" description="Helical" evidence="1">
    <location>
        <begin position="3"/>
        <end position="23"/>
    </location>
</feature>
<feature type="transmembrane region" description="Helical" evidence="1">
    <location>
        <begin position="60"/>
        <end position="80"/>
    </location>
</feature>
<feature type="transmembrane region" description="Helical" evidence="1">
    <location>
        <begin position="131"/>
        <end position="151"/>
    </location>
</feature>
<feature type="transmembrane region" description="Helical" evidence="1">
    <location>
        <begin position="174"/>
        <end position="194"/>
    </location>
</feature>
<feature type="transmembrane region" description="Helical" evidence="1">
    <location>
        <begin position="252"/>
        <end position="272"/>
    </location>
</feature>
<feature type="transmembrane region" description="Helical" evidence="1">
    <location>
        <begin position="279"/>
        <end position="299"/>
    </location>
</feature>
<feature type="transmembrane region" description="Helical" evidence="1">
    <location>
        <begin position="323"/>
        <end position="343"/>
    </location>
</feature>
<feature type="transmembrane region" description="Helical" evidence="1">
    <location>
        <begin position="352"/>
        <end position="372"/>
    </location>
</feature>
<feature type="transmembrane region" description="Helical" evidence="1">
    <location>
        <begin position="375"/>
        <end position="395"/>
    </location>
</feature>
<feature type="transmembrane region" description="Helical" evidence="1">
    <location>
        <begin position="412"/>
        <end position="432"/>
    </location>
</feature>
<feature type="transmembrane region" description="Helical" evidence="1">
    <location>
        <begin position="481"/>
        <end position="501"/>
    </location>
</feature>
<feature type="transmembrane region" description="Helical" evidence="1">
    <location>
        <begin position="522"/>
        <end position="542"/>
    </location>
</feature>
<organism>
    <name type="scientific">Streptomyces coelicolor (strain ATCC BAA-471 / A3(2) / M145)</name>
    <dbReference type="NCBI Taxonomy" id="100226"/>
    <lineage>
        <taxon>Bacteria</taxon>
        <taxon>Bacillati</taxon>
        <taxon>Actinomycetota</taxon>
        <taxon>Actinomycetes</taxon>
        <taxon>Kitasatosporales</taxon>
        <taxon>Streptomycetaceae</taxon>
        <taxon>Streptomyces</taxon>
        <taxon>Streptomyces albidoflavus group</taxon>
    </lineage>
</organism>
<gene>
    <name evidence="1" type="primary">kdpA</name>
    <name type="ordered locus">SCO3718</name>
    <name type="ORF">SCH35.06</name>
</gene>
<sequence length="554" mass="57730">MSPVLAGVLQLLALTAALALAHVPLGNYLARVYSSPKHLRIEKWIYKSIGADPDTEMRWPAYLRGVLAFSLAGVLFLYLLQRLQGVLPGSLGFASIDPDQAFNTAASFVANTNWQSYYGEQAMGHVVQTAGLAVQNFVSAAVGIAVAVALVRGFARSRTGELGNFWADLVRGVVRVLVPIAAVGAVILVACGVIQNFSGIHEVGQFMGGTQEWNGGAVASQEVIKELGTNGGGYFNANSAHPFENPTPFTNLFEIFLILLIPVALTRTFGIMTGSVRQGYAILGTMAAIWAGFVALMMWTEFAHHGPALQAAGGAMEGKELRFGIGGSSLFAVTTTLTSTGAVDSFHSSYTGLGGGITMLGMMLGEIAPGGVGSGLYGMLVMAVVAVFIAGLMVGRTPEYLGKKIGTREIKFAACYILITPALVLVFTAAAMALPTPGDSMTNSGAHGFSEILYAYTSASNNNGSAFAGLNADTQWFNSTLGLAMLLGRFVPMVFVLALAGSLARQQPVPATAGTLRTEKPLFAGLLAGAVLIITGLTYFPALALGPLAEGLAA</sequence>
<evidence type="ECO:0000255" key="1">
    <source>
        <dbReference type="HAMAP-Rule" id="MF_00275"/>
    </source>
</evidence>
<comment type="function">
    <text evidence="1">Part of the high-affinity ATP-driven potassium transport (or Kdp) system, which catalyzes the hydrolysis of ATP coupled with the electrogenic transport of potassium into the cytoplasm. This subunit binds the extracellular potassium ions and delivers the ions to the membrane domain of KdpB through an intramembrane tunnel.</text>
</comment>
<comment type="subunit">
    <text evidence="1">The system is composed of three essential subunits: KdpA, KdpB and KdpC.</text>
</comment>
<comment type="subcellular location">
    <subcellularLocation>
        <location evidence="1">Cell membrane</location>
        <topology evidence="1">Multi-pass membrane protein</topology>
    </subcellularLocation>
</comment>
<comment type="similarity">
    <text evidence="1">Belongs to the KdpA family.</text>
</comment>
<accession>Q9X900</accession>
<protein>
    <recommendedName>
        <fullName evidence="1">Potassium-transporting ATPase potassium-binding subunit</fullName>
    </recommendedName>
    <alternativeName>
        <fullName evidence="1">ATP phosphohydrolase [potassium-transporting] A chain</fullName>
    </alternativeName>
    <alternativeName>
        <fullName evidence="1">Potassium-binding and translocating subunit A</fullName>
    </alternativeName>
    <alternativeName>
        <fullName evidence="1">Potassium-translocating ATPase A chain</fullName>
    </alternativeName>
</protein>
<reference key="1">
    <citation type="journal article" date="2002" name="Nature">
        <title>Complete genome sequence of the model actinomycete Streptomyces coelicolor A3(2).</title>
        <authorList>
            <person name="Bentley S.D."/>
            <person name="Chater K.F."/>
            <person name="Cerdeno-Tarraga A.-M."/>
            <person name="Challis G.L."/>
            <person name="Thomson N.R."/>
            <person name="James K.D."/>
            <person name="Harris D.E."/>
            <person name="Quail M.A."/>
            <person name="Kieser H."/>
            <person name="Harper D."/>
            <person name="Bateman A."/>
            <person name="Brown S."/>
            <person name="Chandra G."/>
            <person name="Chen C.W."/>
            <person name="Collins M."/>
            <person name="Cronin A."/>
            <person name="Fraser A."/>
            <person name="Goble A."/>
            <person name="Hidalgo J."/>
            <person name="Hornsby T."/>
            <person name="Howarth S."/>
            <person name="Huang C.-H."/>
            <person name="Kieser T."/>
            <person name="Larke L."/>
            <person name="Murphy L.D."/>
            <person name="Oliver K."/>
            <person name="O'Neil S."/>
            <person name="Rabbinowitsch E."/>
            <person name="Rajandream M.A."/>
            <person name="Rutherford K.M."/>
            <person name="Rutter S."/>
            <person name="Seeger K."/>
            <person name="Saunders D."/>
            <person name="Sharp S."/>
            <person name="Squares R."/>
            <person name="Squares S."/>
            <person name="Taylor K."/>
            <person name="Warren T."/>
            <person name="Wietzorrek A."/>
            <person name="Woodward J.R."/>
            <person name="Barrell B.G."/>
            <person name="Parkhill J."/>
            <person name="Hopwood D.A."/>
        </authorList>
    </citation>
    <scope>NUCLEOTIDE SEQUENCE [LARGE SCALE GENOMIC DNA]</scope>
    <source>
        <strain>ATCC BAA-471 / A3(2) / M145</strain>
    </source>
</reference>
<name>KDPA_STRCO</name>